<sequence length="225" mass="25629">MLRIHKEGKIIIRNSLFILLLLNLALIGGVRMSKSVTTALGISSTLLGLWILYFFRNPTRLINKQEELILSPADGKVVAIKQIYEDEYFKEERIQISIFMSPFNVHVNRSPISGVLEYFKYHPGKYLVAFHPKSSTKNERTTAVVKRIDGIEVLFRQIAGFVARRIKFYPKVGDEVHQGDEVGFIKFGSRLDIFLPLNADIQVNLKEHVRGGKSIIAKIASEEEE</sequence>
<name>PSD_AMOA5</name>
<gene>
    <name evidence="1" type="primary">psd</name>
    <name type="ordered locus">Aasi_0794</name>
</gene>
<organism>
    <name type="scientific">Amoebophilus asiaticus (strain 5a2)</name>
    <dbReference type="NCBI Taxonomy" id="452471"/>
    <lineage>
        <taxon>Bacteria</taxon>
        <taxon>Pseudomonadati</taxon>
        <taxon>Bacteroidota</taxon>
        <taxon>Cytophagia</taxon>
        <taxon>Cytophagales</taxon>
        <taxon>Amoebophilaceae</taxon>
        <taxon>Candidatus Amoebophilus</taxon>
    </lineage>
</organism>
<protein>
    <recommendedName>
        <fullName evidence="1">Phosphatidylserine decarboxylase proenzyme</fullName>
        <ecNumber evidence="1">4.1.1.65</ecNumber>
    </recommendedName>
    <component>
        <recommendedName>
            <fullName evidence="1">Phosphatidylserine decarboxylase alpha chain</fullName>
        </recommendedName>
    </component>
    <component>
        <recommendedName>
            <fullName evidence="1">Phosphatidylserine decarboxylase beta chain</fullName>
        </recommendedName>
    </component>
</protein>
<keyword id="KW-1003">Cell membrane</keyword>
<keyword id="KW-0210">Decarboxylase</keyword>
<keyword id="KW-0444">Lipid biosynthesis</keyword>
<keyword id="KW-0443">Lipid metabolism</keyword>
<keyword id="KW-0456">Lyase</keyword>
<keyword id="KW-0472">Membrane</keyword>
<keyword id="KW-0594">Phospholipid biosynthesis</keyword>
<keyword id="KW-1208">Phospholipid metabolism</keyword>
<keyword id="KW-0670">Pyruvate</keyword>
<keyword id="KW-1185">Reference proteome</keyword>
<keyword id="KW-0865">Zymogen</keyword>
<comment type="function">
    <text evidence="1">Catalyzes the formation of phosphatidylethanolamine (PtdEtn) from phosphatidylserine (PtdSer).</text>
</comment>
<comment type="catalytic activity">
    <reaction evidence="1">
        <text>a 1,2-diacyl-sn-glycero-3-phospho-L-serine + H(+) = a 1,2-diacyl-sn-glycero-3-phosphoethanolamine + CO2</text>
        <dbReference type="Rhea" id="RHEA:20828"/>
        <dbReference type="ChEBI" id="CHEBI:15378"/>
        <dbReference type="ChEBI" id="CHEBI:16526"/>
        <dbReference type="ChEBI" id="CHEBI:57262"/>
        <dbReference type="ChEBI" id="CHEBI:64612"/>
        <dbReference type="EC" id="4.1.1.65"/>
    </reaction>
</comment>
<comment type="cofactor">
    <cofactor evidence="1">
        <name>pyruvate</name>
        <dbReference type="ChEBI" id="CHEBI:15361"/>
    </cofactor>
    <text evidence="1">Binds 1 pyruvoyl group covalently per subunit.</text>
</comment>
<comment type="pathway">
    <text evidence="1">Phospholipid metabolism; phosphatidylethanolamine biosynthesis; phosphatidylethanolamine from CDP-diacylglycerol: step 2/2.</text>
</comment>
<comment type="subunit">
    <text evidence="1">Heterodimer of a large membrane-associated beta subunit and a small pyruvoyl-containing alpha subunit.</text>
</comment>
<comment type="subcellular location">
    <subcellularLocation>
        <location evidence="1">Cell membrane</location>
        <topology evidence="1">Peripheral membrane protein</topology>
    </subcellularLocation>
</comment>
<comment type="PTM">
    <text evidence="1">Is synthesized initially as an inactive proenzyme. Formation of the active enzyme involves a self-maturation process in which the active site pyruvoyl group is generated from an internal serine residue via an autocatalytic post-translational modification. Two non-identical subunits are generated from the proenzyme in this reaction, and the pyruvate is formed at the N-terminus of the alpha chain, which is derived from the carboxyl end of the proenzyme. The post-translation cleavage follows an unusual pathway, termed non-hydrolytic serinolysis, in which the side chain hydroxyl group of the serine supplies its oxygen atom to form the C-terminus of the beta chain, while the remainder of the serine residue undergoes an oxidative deamination to produce ammonia and the pyruvoyl prosthetic group on the alpha chain.</text>
</comment>
<comment type="similarity">
    <text evidence="1">Belongs to the phosphatidylserine decarboxylase family. PSD-A subfamily.</text>
</comment>
<evidence type="ECO:0000255" key="1">
    <source>
        <dbReference type="HAMAP-Rule" id="MF_00664"/>
    </source>
</evidence>
<accession>B3ESH0</accession>
<dbReference type="EC" id="4.1.1.65" evidence="1"/>
<dbReference type="EMBL" id="CP001102">
    <property type="protein sequence ID" value="ACE06172.1"/>
    <property type="molecule type" value="Genomic_DNA"/>
</dbReference>
<dbReference type="RefSeq" id="WP_012472940.1">
    <property type="nucleotide sequence ID" value="NC_010830.1"/>
</dbReference>
<dbReference type="SMR" id="B3ESH0"/>
<dbReference type="STRING" id="452471.Aasi_0794"/>
<dbReference type="KEGG" id="aas:Aasi_0794"/>
<dbReference type="eggNOG" id="COG0688">
    <property type="taxonomic scope" value="Bacteria"/>
</dbReference>
<dbReference type="HOGENOM" id="CLU_072492_1_0_10"/>
<dbReference type="OrthoDB" id="9790893at2"/>
<dbReference type="UniPathway" id="UPA00558">
    <property type="reaction ID" value="UER00616"/>
</dbReference>
<dbReference type="Proteomes" id="UP000001227">
    <property type="component" value="Chromosome"/>
</dbReference>
<dbReference type="GO" id="GO:0005886">
    <property type="term" value="C:plasma membrane"/>
    <property type="evidence" value="ECO:0007669"/>
    <property type="project" value="UniProtKB-SubCell"/>
</dbReference>
<dbReference type="GO" id="GO:0004609">
    <property type="term" value="F:phosphatidylserine decarboxylase activity"/>
    <property type="evidence" value="ECO:0007669"/>
    <property type="project" value="UniProtKB-UniRule"/>
</dbReference>
<dbReference type="GO" id="GO:0006646">
    <property type="term" value="P:phosphatidylethanolamine biosynthetic process"/>
    <property type="evidence" value="ECO:0007669"/>
    <property type="project" value="UniProtKB-UniRule"/>
</dbReference>
<dbReference type="HAMAP" id="MF_00664">
    <property type="entry name" value="PS_decarb_PSD_A"/>
    <property type="match status" value="1"/>
</dbReference>
<dbReference type="InterPro" id="IPR003817">
    <property type="entry name" value="PS_Dcarbxylase"/>
</dbReference>
<dbReference type="InterPro" id="IPR033175">
    <property type="entry name" value="PSD-A"/>
</dbReference>
<dbReference type="NCBIfam" id="NF003678">
    <property type="entry name" value="PRK05305.1-2"/>
    <property type="match status" value="1"/>
</dbReference>
<dbReference type="NCBIfam" id="NF003685">
    <property type="entry name" value="PRK05305.2-5"/>
    <property type="match status" value="1"/>
</dbReference>
<dbReference type="PANTHER" id="PTHR35809">
    <property type="entry name" value="ARCHAETIDYLSERINE DECARBOXYLASE PROENZYME-RELATED"/>
    <property type="match status" value="1"/>
</dbReference>
<dbReference type="PANTHER" id="PTHR35809:SF1">
    <property type="entry name" value="ARCHAETIDYLSERINE DECARBOXYLASE PROENZYME-RELATED"/>
    <property type="match status" value="1"/>
</dbReference>
<dbReference type="Pfam" id="PF02666">
    <property type="entry name" value="PS_Dcarbxylase"/>
    <property type="match status" value="1"/>
</dbReference>
<reference key="1">
    <citation type="journal article" date="2010" name="J. Bacteriol.">
        <title>The genome of the amoeba symbiont 'Candidatus Amoebophilus asiaticus' reveals common mechanisms for host cell interaction among amoeba-associated bacteria.</title>
        <authorList>
            <person name="Schmitz-Esser S."/>
            <person name="Tischler P."/>
            <person name="Arnold R."/>
            <person name="Montanaro J."/>
            <person name="Wagner M."/>
            <person name="Rattei T."/>
            <person name="Horn M."/>
        </authorList>
    </citation>
    <scope>NUCLEOTIDE SEQUENCE [LARGE SCALE GENOMIC DNA]</scope>
    <source>
        <strain>5a2</strain>
    </source>
</reference>
<feature type="chain" id="PRO_1000192890" description="Phosphatidylserine decarboxylase beta chain" evidence="1">
    <location>
        <begin position="1"/>
        <end position="188"/>
    </location>
</feature>
<feature type="chain" id="PRO_1000192891" description="Phosphatidylserine decarboxylase alpha chain" evidence="1">
    <location>
        <begin position="189"/>
        <end position="225"/>
    </location>
</feature>
<feature type="active site" description="Schiff-base intermediate with substrate; via pyruvic acid" evidence="1">
    <location>
        <position position="189"/>
    </location>
</feature>
<feature type="site" description="Cleavage (non-hydrolytic); by autocatalysis" evidence="1">
    <location>
        <begin position="188"/>
        <end position="189"/>
    </location>
</feature>
<feature type="modified residue" description="Pyruvic acid (Ser); by autocatalysis" evidence="1">
    <location>
        <position position="189"/>
    </location>
</feature>
<proteinExistence type="inferred from homology"/>